<evidence type="ECO:0000255" key="1">
    <source>
        <dbReference type="HAMAP-Rule" id="MF_01068"/>
    </source>
</evidence>
<comment type="function">
    <text evidence="1">Probably involved in the control of the structural glucose backbone of osmoregulated periplasmic glucans (OPGs).</text>
</comment>
<comment type="pathway">
    <text evidence="1">Glycan metabolism; osmoregulated periplasmic glucan (OPG) biosynthesis.</text>
</comment>
<comment type="subcellular location">
    <subcellularLocation>
        <location evidence="1">Periplasm</location>
    </subcellularLocation>
</comment>
<comment type="PTM">
    <text>Predicted to be exported by the Tat system. The position of the signal peptide cleavage has not been experimentally proven.</text>
</comment>
<comment type="similarity">
    <text evidence="1">Belongs to the OpgD/OpgG family.</text>
</comment>
<accession>Q320I8</accession>
<reference key="1">
    <citation type="journal article" date="2005" name="Nucleic Acids Res.">
        <title>Genome dynamics and diversity of Shigella species, the etiologic agents of bacillary dysentery.</title>
        <authorList>
            <person name="Yang F."/>
            <person name="Yang J."/>
            <person name="Zhang X."/>
            <person name="Chen L."/>
            <person name="Jiang Y."/>
            <person name="Yan Y."/>
            <person name="Tang X."/>
            <person name="Wang J."/>
            <person name="Xiong Z."/>
            <person name="Dong J."/>
            <person name="Xue Y."/>
            <person name="Zhu Y."/>
            <person name="Xu X."/>
            <person name="Sun L."/>
            <person name="Chen S."/>
            <person name="Nie H."/>
            <person name="Peng J."/>
            <person name="Xu J."/>
            <person name="Wang Y."/>
            <person name="Yuan Z."/>
            <person name="Wen Y."/>
            <person name="Yao Z."/>
            <person name="Shen Y."/>
            <person name="Qiang B."/>
            <person name="Hou Y."/>
            <person name="Yu J."/>
            <person name="Jin Q."/>
        </authorList>
    </citation>
    <scope>NUCLEOTIDE SEQUENCE [LARGE SCALE GENOMIC DNA]</scope>
    <source>
        <strain>Sb227</strain>
    </source>
</reference>
<name>OPGD_SHIBS</name>
<feature type="signal peptide" description="Tat-type signal" evidence="1">
    <location>
        <begin position="1"/>
        <end position="32"/>
    </location>
</feature>
<feature type="chain" id="PRO_1000064552" description="Glucans biosynthesis protein D">
    <location>
        <begin position="33"/>
        <end position="551"/>
    </location>
</feature>
<proteinExistence type="inferred from homology"/>
<gene>
    <name evidence="1" type="primary">mdoD</name>
    <name evidence="1" type="synonym">opgD</name>
    <name type="ordered locus">SBO_1663</name>
</gene>
<keyword id="KW-0574">Periplasm</keyword>
<keyword id="KW-0732">Signal</keyword>
<sequence>MDRRRFIKGSMAMAAVCGTSGIASLFSQAAFAADSDIADGQTQRFDFSILQSMAHDLAQTAWRGAPRPLPDTLATMTPQAYNSIQYDAEKSLWHNVENRQLDAQFFHMGMGFRRRVRMFSVDPATHLAREIHFRPELFKYNDAGVDTKQLEGQSDLGFAGFRVFKAPELARRDVVSFLGASYFRAVDDTYQYGLSARGLAIDTYTDSKEEFPDFTAFWFDTVKPGATTFTVYALLDSASITGAYKFTIHCEKSQVIMDVENHLYARKDIKQLGIAPMTSMFSCGTNERRMCDTIHPQIHDSDRLSMWRGNGEWICRPLNNPQKLQFNAYTDNNPKGFGLLQLDRDFSHYQDIMGWYNKRPSLWVEPRNKWGKGTIGLMEIPTTGETLDNIVCFWQPEKAVKAGDEFAFQYRLYWSAQPPVHCPLARVMATRTGMGGFPEGWAPGEHYPEKWARRFAVDFVGGDLKAAAPKGIEPVITLSSGEAKQIEILYIEPIDGYRIQFDWYPTSDSTDPVDMRMYLRCQGDAISETWLYQYFPPAPDKRQYVDDRVMS</sequence>
<organism>
    <name type="scientific">Shigella boydii serotype 4 (strain Sb227)</name>
    <dbReference type="NCBI Taxonomy" id="300268"/>
    <lineage>
        <taxon>Bacteria</taxon>
        <taxon>Pseudomonadati</taxon>
        <taxon>Pseudomonadota</taxon>
        <taxon>Gammaproteobacteria</taxon>
        <taxon>Enterobacterales</taxon>
        <taxon>Enterobacteriaceae</taxon>
        <taxon>Shigella</taxon>
    </lineage>
</organism>
<protein>
    <recommendedName>
        <fullName evidence="1">Glucans biosynthesis protein D</fullName>
    </recommendedName>
</protein>
<dbReference type="EMBL" id="CP000036">
    <property type="protein sequence ID" value="ABB66270.1"/>
    <property type="molecule type" value="Genomic_DNA"/>
</dbReference>
<dbReference type="RefSeq" id="WP_000375956.1">
    <property type="nucleotide sequence ID" value="NC_007613.1"/>
</dbReference>
<dbReference type="SMR" id="Q320I8"/>
<dbReference type="GeneID" id="93775566"/>
<dbReference type="KEGG" id="sbo:SBO_1663"/>
<dbReference type="HOGENOM" id="CLU_023403_2_0_6"/>
<dbReference type="UniPathway" id="UPA00637"/>
<dbReference type="Proteomes" id="UP000007067">
    <property type="component" value="Chromosome"/>
</dbReference>
<dbReference type="GO" id="GO:0030288">
    <property type="term" value="C:outer membrane-bounded periplasmic space"/>
    <property type="evidence" value="ECO:0007669"/>
    <property type="project" value="TreeGrafter"/>
</dbReference>
<dbReference type="GO" id="GO:0030246">
    <property type="term" value="F:carbohydrate binding"/>
    <property type="evidence" value="ECO:0007669"/>
    <property type="project" value="InterPro"/>
</dbReference>
<dbReference type="GO" id="GO:0003824">
    <property type="term" value="F:catalytic activity"/>
    <property type="evidence" value="ECO:0007669"/>
    <property type="project" value="InterPro"/>
</dbReference>
<dbReference type="GO" id="GO:0051274">
    <property type="term" value="P:beta-glucan biosynthetic process"/>
    <property type="evidence" value="ECO:0007669"/>
    <property type="project" value="TreeGrafter"/>
</dbReference>
<dbReference type="FunFam" id="2.60.40.10:FF:000379">
    <property type="entry name" value="Glucans biosynthesis protein D"/>
    <property type="match status" value="1"/>
</dbReference>
<dbReference type="FunFam" id="2.70.98.10:FF:000004">
    <property type="entry name" value="Glucans biosynthesis protein D"/>
    <property type="match status" value="1"/>
</dbReference>
<dbReference type="Gene3D" id="2.70.98.10">
    <property type="match status" value="1"/>
</dbReference>
<dbReference type="Gene3D" id="2.60.40.10">
    <property type="entry name" value="Immunoglobulins"/>
    <property type="match status" value="1"/>
</dbReference>
<dbReference type="HAMAP" id="MF_01068">
    <property type="entry name" value="MdoD_OpgD"/>
    <property type="match status" value="1"/>
</dbReference>
<dbReference type="InterPro" id="IPR011013">
    <property type="entry name" value="Gal_mutarotase_sf_dom"/>
</dbReference>
<dbReference type="InterPro" id="IPR014718">
    <property type="entry name" value="GH-type_carb-bd"/>
</dbReference>
<dbReference type="InterPro" id="IPR023724">
    <property type="entry name" value="Glucan_biosyn_MdoD"/>
</dbReference>
<dbReference type="InterPro" id="IPR014438">
    <property type="entry name" value="Glucan_biosyn_MdoG/MdoD"/>
</dbReference>
<dbReference type="InterPro" id="IPR007444">
    <property type="entry name" value="Glucan_biosyn_MdoG_C"/>
</dbReference>
<dbReference type="InterPro" id="IPR013783">
    <property type="entry name" value="Ig-like_fold"/>
</dbReference>
<dbReference type="InterPro" id="IPR014756">
    <property type="entry name" value="Ig_E-set"/>
</dbReference>
<dbReference type="InterPro" id="IPR006311">
    <property type="entry name" value="TAT_signal"/>
</dbReference>
<dbReference type="InterPro" id="IPR019546">
    <property type="entry name" value="TAT_signal_bac_arc"/>
</dbReference>
<dbReference type="NCBIfam" id="TIGR01409">
    <property type="entry name" value="TAT_signal_seq"/>
    <property type="match status" value="1"/>
</dbReference>
<dbReference type="PANTHER" id="PTHR30504">
    <property type="entry name" value="GLUCANS BIOSYNTHESIS PROTEIN"/>
    <property type="match status" value="1"/>
</dbReference>
<dbReference type="PANTHER" id="PTHR30504:SF3">
    <property type="entry name" value="GLUCANS BIOSYNTHESIS PROTEIN D"/>
    <property type="match status" value="1"/>
</dbReference>
<dbReference type="Pfam" id="PF04349">
    <property type="entry name" value="MdoG"/>
    <property type="match status" value="1"/>
</dbReference>
<dbReference type="PIRSF" id="PIRSF006281">
    <property type="entry name" value="MdoG"/>
    <property type="match status" value="1"/>
</dbReference>
<dbReference type="SUPFAM" id="SSF81296">
    <property type="entry name" value="E set domains"/>
    <property type="match status" value="1"/>
</dbReference>
<dbReference type="SUPFAM" id="SSF74650">
    <property type="entry name" value="Galactose mutarotase-like"/>
    <property type="match status" value="1"/>
</dbReference>
<dbReference type="PROSITE" id="PS51318">
    <property type="entry name" value="TAT"/>
    <property type="match status" value="1"/>
</dbReference>